<comment type="function">
    <text evidence="1">Binds the lower part of the 30S subunit head. Binds mRNA in the 70S ribosome, positioning it for translation.</text>
</comment>
<comment type="subunit">
    <text evidence="1">Part of the 30S ribosomal subunit. Forms a tight complex with proteins S10 and S14.</text>
</comment>
<comment type="similarity">
    <text evidence="1">Belongs to the universal ribosomal protein uS3 family.</text>
</comment>
<sequence length="211" mass="23582">MGQKSNPIGLRLKIVGTWDSLWYANRDYATKLHEDLLLRSFVKKTFHHAAVSKVVIARKVDAVIINIHSARPGVIIGKKGVDIDRIKQKIAKMVNHEVELHIVEVKKPDLKAVLIAENIAQQLEKRVSFRRAMKRGVQNCLKMGAKGVKVSCAGRLGGAEIARTEWYKEGSVPLHTFRANIDYSCVEAKTIYGIVGVKVWVYVGDSRAVVE</sequence>
<feature type="chain" id="PRO_0000293749" description="Small ribosomal subunit protein uS3">
    <location>
        <begin position="1"/>
        <end position="211"/>
    </location>
</feature>
<feature type="domain" description="KH type-2" evidence="1">
    <location>
        <begin position="38"/>
        <end position="106"/>
    </location>
</feature>
<proteinExistence type="inferred from homology"/>
<name>RS3_ANAPZ</name>
<organism>
    <name type="scientific">Anaplasma phagocytophilum (strain HZ)</name>
    <dbReference type="NCBI Taxonomy" id="212042"/>
    <lineage>
        <taxon>Bacteria</taxon>
        <taxon>Pseudomonadati</taxon>
        <taxon>Pseudomonadota</taxon>
        <taxon>Alphaproteobacteria</taxon>
        <taxon>Rickettsiales</taxon>
        <taxon>Anaplasmataceae</taxon>
        <taxon>Anaplasma</taxon>
        <taxon>phagocytophilum group</taxon>
    </lineage>
</organism>
<evidence type="ECO:0000255" key="1">
    <source>
        <dbReference type="HAMAP-Rule" id="MF_01309"/>
    </source>
</evidence>
<evidence type="ECO:0000305" key="2"/>
<reference key="1">
    <citation type="journal article" date="2006" name="PLoS Genet.">
        <title>Comparative genomics of emerging human ehrlichiosis agents.</title>
        <authorList>
            <person name="Dunning Hotopp J.C."/>
            <person name="Lin M."/>
            <person name="Madupu R."/>
            <person name="Crabtree J."/>
            <person name="Angiuoli S.V."/>
            <person name="Eisen J.A."/>
            <person name="Seshadri R."/>
            <person name="Ren Q."/>
            <person name="Wu M."/>
            <person name="Utterback T.R."/>
            <person name="Smith S."/>
            <person name="Lewis M."/>
            <person name="Khouri H."/>
            <person name="Zhang C."/>
            <person name="Niu H."/>
            <person name="Lin Q."/>
            <person name="Ohashi N."/>
            <person name="Zhi N."/>
            <person name="Nelson W.C."/>
            <person name="Brinkac L.M."/>
            <person name="Dodson R.J."/>
            <person name="Rosovitz M.J."/>
            <person name="Sundaram J.P."/>
            <person name="Daugherty S.C."/>
            <person name="Davidsen T."/>
            <person name="Durkin A.S."/>
            <person name="Gwinn M.L."/>
            <person name="Haft D.H."/>
            <person name="Selengut J.D."/>
            <person name="Sullivan S.A."/>
            <person name="Zafar N."/>
            <person name="Zhou L."/>
            <person name="Benahmed F."/>
            <person name="Forberger H."/>
            <person name="Halpin R."/>
            <person name="Mulligan S."/>
            <person name="Robinson J."/>
            <person name="White O."/>
            <person name="Rikihisa Y."/>
            <person name="Tettelin H."/>
        </authorList>
    </citation>
    <scope>NUCLEOTIDE SEQUENCE [LARGE SCALE GENOMIC DNA]</scope>
    <source>
        <strain>HZ</strain>
    </source>
</reference>
<gene>
    <name evidence="1" type="primary">rpsC</name>
    <name type="ordered locus">APH_0286</name>
</gene>
<dbReference type="EMBL" id="CP000235">
    <property type="protein sequence ID" value="ABD43781.1"/>
    <property type="molecule type" value="Genomic_DNA"/>
</dbReference>
<dbReference type="RefSeq" id="WP_011450421.1">
    <property type="nucleotide sequence ID" value="NC_007797.1"/>
</dbReference>
<dbReference type="SMR" id="Q2GL53"/>
<dbReference type="STRING" id="212042.APH_0286"/>
<dbReference type="PaxDb" id="212042-APH_0286"/>
<dbReference type="EnsemblBacteria" id="ABD43781">
    <property type="protein sequence ID" value="ABD43781"/>
    <property type="gene ID" value="APH_0286"/>
</dbReference>
<dbReference type="GeneID" id="92747517"/>
<dbReference type="KEGG" id="aph:APH_0286"/>
<dbReference type="eggNOG" id="COG0092">
    <property type="taxonomic scope" value="Bacteria"/>
</dbReference>
<dbReference type="HOGENOM" id="CLU_058591_0_2_5"/>
<dbReference type="Proteomes" id="UP000001943">
    <property type="component" value="Chromosome"/>
</dbReference>
<dbReference type="GO" id="GO:0022627">
    <property type="term" value="C:cytosolic small ribosomal subunit"/>
    <property type="evidence" value="ECO:0007669"/>
    <property type="project" value="TreeGrafter"/>
</dbReference>
<dbReference type="GO" id="GO:0003729">
    <property type="term" value="F:mRNA binding"/>
    <property type="evidence" value="ECO:0007669"/>
    <property type="project" value="UniProtKB-UniRule"/>
</dbReference>
<dbReference type="GO" id="GO:0019843">
    <property type="term" value="F:rRNA binding"/>
    <property type="evidence" value="ECO:0007669"/>
    <property type="project" value="UniProtKB-UniRule"/>
</dbReference>
<dbReference type="GO" id="GO:0003735">
    <property type="term" value="F:structural constituent of ribosome"/>
    <property type="evidence" value="ECO:0007669"/>
    <property type="project" value="InterPro"/>
</dbReference>
<dbReference type="GO" id="GO:0006412">
    <property type="term" value="P:translation"/>
    <property type="evidence" value="ECO:0007669"/>
    <property type="project" value="UniProtKB-UniRule"/>
</dbReference>
<dbReference type="CDD" id="cd02412">
    <property type="entry name" value="KH-II_30S_S3"/>
    <property type="match status" value="1"/>
</dbReference>
<dbReference type="FunFam" id="3.30.300.20:FF:000001">
    <property type="entry name" value="30S ribosomal protein S3"/>
    <property type="match status" value="1"/>
</dbReference>
<dbReference type="Gene3D" id="3.30.300.20">
    <property type="match status" value="1"/>
</dbReference>
<dbReference type="Gene3D" id="3.30.1140.32">
    <property type="entry name" value="Ribosomal protein S3, C-terminal domain"/>
    <property type="match status" value="1"/>
</dbReference>
<dbReference type="HAMAP" id="MF_01309_B">
    <property type="entry name" value="Ribosomal_uS3_B"/>
    <property type="match status" value="1"/>
</dbReference>
<dbReference type="InterPro" id="IPR004087">
    <property type="entry name" value="KH_dom"/>
</dbReference>
<dbReference type="InterPro" id="IPR015946">
    <property type="entry name" value="KH_dom-like_a/b"/>
</dbReference>
<dbReference type="InterPro" id="IPR004044">
    <property type="entry name" value="KH_dom_type_2"/>
</dbReference>
<dbReference type="InterPro" id="IPR009019">
    <property type="entry name" value="KH_sf_prok-type"/>
</dbReference>
<dbReference type="InterPro" id="IPR036419">
    <property type="entry name" value="Ribosomal_S3_C_sf"/>
</dbReference>
<dbReference type="InterPro" id="IPR005704">
    <property type="entry name" value="Ribosomal_uS3_bac-typ"/>
</dbReference>
<dbReference type="InterPro" id="IPR001351">
    <property type="entry name" value="Ribosomal_uS3_C"/>
</dbReference>
<dbReference type="InterPro" id="IPR018280">
    <property type="entry name" value="Ribosomal_uS3_CS"/>
</dbReference>
<dbReference type="NCBIfam" id="TIGR01009">
    <property type="entry name" value="rpsC_bact"/>
    <property type="match status" value="1"/>
</dbReference>
<dbReference type="PANTHER" id="PTHR11760">
    <property type="entry name" value="30S/40S RIBOSOMAL PROTEIN S3"/>
    <property type="match status" value="1"/>
</dbReference>
<dbReference type="PANTHER" id="PTHR11760:SF19">
    <property type="entry name" value="SMALL RIBOSOMAL SUBUNIT PROTEIN US3C"/>
    <property type="match status" value="1"/>
</dbReference>
<dbReference type="Pfam" id="PF07650">
    <property type="entry name" value="KH_2"/>
    <property type="match status" value="1"/>
</dbReference>
<dbReference type="Pfam" id="PF00189">
    <property type="entry name" value="Ribosomal_S3_C"/>
    <property type="match status" value="1"/>
</dbReference>
<dbReference type="SMART" id="SM00322">
    <property type="entry name" value="KH"/>
    <property type="match status" value="1"/>
</dbReference>
<dbReference type="SUPFAM" id="SSF54814">
    <property type="entry name" value="Prokaryotic type KH domain (KH-domain type II)"/>
    <property type="match status" value="1"/>
</dbReference>
<dbReference type="SUPFAM" id="SSF54821">
    <property type="entry name" value="Ribosomal protein S3 C-terminal domain"/>
    <property type="match status" value="1"/>
</dbReference>
<dbReference type="PROSITE" id="PS50823">
    <property type="entry name" value="KH_TYPE_2"/>
    <property type="match status" value="1"/>
</dbReference>
<dbReference type="PROSITE" id="PS00548">
    <property type="entry name" value="RIBOSOMAL_S3"/>
    <property type="match status" value="1"/>
</dbReference>
<protein>
    <recommendedName>
        <fullName evidence="1">Small ribosomal subunit protein uS3</fullName>
    </recommendedName>
    <alternativeName>
        <fullName evidence="2">30S ribosomal protein S3</fullName>
    </alternativeName>
</protein>
<accession>Q2GL53</accession>
<keyword id="KW-0687">Ribonucleoprotein</keyword>
<keyword id="KW-0689">Ribosomal protein</keyword>
<keyword id="KW-0694">RNA-binding</keyword>
<keyword id="KW-0699">rRNA-binding</keyword>